<accession>Q31Q18</accession>
<feature type="chain" id="PRO_0000252741" description="Phosphoribosylformylglycinamidine synthase subunit PurQ">
    <location>
        <begin position="1"/>
        <end position="221"/>
    </location>
</feature>
<feature type="domain" description="Glutamine amidotransferase type-1" evidence="1">
    <location>
        <begin position="2"/>
        <end position="221"/>
    </location>
</feature>
<feature type="active site" description="Nucleophile" evidence="1">
    <location>
        <position position="86"/>
    </location>
</feature>
<feature type="active site" evidence="1">
    <location>
        <position position="194"/>
    </location>
</feature>
<feature type="active site" evidence="1">
    <location>
        <position position="196"/>
    </location>
</feature>
<evidence type="ECO:0000255" key="1">
    <source>
        <dbReference type="HAMAP-Rule" id="MF_00421"/>
    </source>
</evidence>
<gene>
    <name evidence="1" type="primary">purQ</name>
    <name type="ordered locus">Synpcc7942_0819</name>
</gene>
<reference key="1">
    <citation type="submission" date="2005-08" db="EMBL/GenBank/DDBJ databases">
        <title>Complete sequence of chromosome 1 of Synechococcus elongatus PCC 7942.</title>
        <authorList>
            <consortium name="US DOE Joint Genome Institute"/>
            <person name="Copeland A."/>
            <person name="Lucas S."/>
            <person name="Lapidus A."/>
            <person name="Barry K."/>
            <person name="Detter J.C."/>
            <person name="Glavina T."/>
            <person name="Hammon N."/>
            <person name="Israni S."/>
            <person name="Pitluck S."/>
            <person name="Schmutz J."/>
            <person name="Larimer F."/>
            <person name="Land M."/>
            <person name="Kyrpides N."/>
            <person name="Lykidis A."/>
            <person name="Golden S."/>
            <person name="Richardson P."/>
        </authorList>
    </citation>
    <scope>NUCLEOTIDE SEQUENCE [LARGE SCALE GENOMIC DNA]</scope>
    <source>
        <strain>ATCC 33912 / PCC 7942 / FACHB-805</strain>
    </source>
</reference>
<keyword id="KW-0067">ATP-binding</keyword>
<keyword id="KW-0963">Cytoplasm</keyword>
<keyword id="KW-0315">Glutamine amidotransferase</keyword>
<keyword id="KW-0378">Hydrolase</keyword>
<keyword id="KW-0436">Ligase</keyword>
<keyword id="KW-0547">Nucleotide-binding</keyword>
<keyword id="KW-0658">Purine biosynthesis</keyword>
<keyword id="KW-1185">Reference proteome</keyword>
<dbReference type="EC" id="6.3.5.3" evidence="1"/>
<dbReference type="EC" id="3.5.1.2" evidence="1"/>
<dbReference type="EMBL" id="CP000100">
    <property type="protein sequence ID" value="ABB56851.1"/>
    <property type="molecule type" value="Genomic_DNA"/>
</dbReference>
<dbReference type="RefSeq" id="WP_011243032.1">
    <property type="nucleotide sequence ID" value="NZ_JACJTX010000005.1"/>
</dbReference>
<dbReference type="SMR" id="Q31Q18"/>
<dbReference type="STRING" id="1140.Synpcc7942_0819"/>
<dbReference type="PaxDb" id="1140-Synpcc7942_0819"/>
<dbReference type="GeneID" id="72429665"/>
<dbReference type="KEGG" id="syf:Synpcc7942_0819"/>
<dbReference type="eggNOG" id="COG0047">
    <property type="taxonomic scope" value="Bacteria"/>
</dbReference>
<dbReference type="HOGENOM" id="CLU_001031_3_1_3"/>
<dbReference type="OrthoDB" id="9804441at2"/>
<dbReference type="BioCyc" id="SYNEL:SYNPCC7942_0819-MONOMER"/>
<dbReference type="UniPathway" id="UPA00074">
    <property type="reaction ID" value="UER00128"/>
</dbReference>
<dbReference type="Proteomes" id="UP000889800">
    <property type="component" value="Chromosome"/>
</dbReference>
<dbReference type="GO" id="GO:0005737">
    <property type="term" value="C:cytoplasm"/>
    <property type="evidence" value="ECO:0007669"/>
    <property type="project" value="UniProtKB-SubCell"/>
</dbReference>
<dbReference type="GO" id="GO:0005524">
    <property type="term" value="F:ATP binding"/>
    <property type="evidence" value="ECO:0007669"/>
    <property type="project" value="UniProtKB-KW"/>
</dbReference>
<dbReference type="GO" id="GO:0004359">
    <property type="term" value="F:glutaminase activity"/>
    <property type="evidence" value="ECO:0007669"/>
    <property type="project" value="UniProtKB-EC"/>
</dbReference>
<dbReference type="GO" id="GO:0004642">
    <property type="term" value="F:phosphoribosylformylglycinamidine synthase activity"/>
    <property type="evidence" value="ECO:0007669"/>
    <property type="project" value="UniProtKB-UniRule"/>
</dbReference>
<dbReference type="GO" id="GO:0006189">
    <property type="term" value="P:'de novo' IMP biosynthetic process"/>
    <property type="evidence" value="ECO:0007669"/>
    <property type="project" value="UniProtKB-UniRule"/>
</dbReference>
<dbReference type="CDD" id="cd01740">
    <property type="entry name" value="GATase1_FGAR_AT"/>
    <property type="match status" value="1"/>
</dbReference>
<dbReference type="Gene3D" id="3.40.50.880">
    <property type="match status" value="1"/>
</dbReference>
<dbReference type="HAMAP" id="MF_00421">
    <property type="entry name" value="PurQ"/>
    <property type="match status" value="1"/>
</dbReference>
<dbReference type="InterPro" id="IPR029062">
    <property type="entry name" value="Class_I_gatase-like"/>
</dbReference>
<dbReference type="InterPro" id="IPR010075">
    <property type="entry name" value="PRibForGlyAmidine_synth_PurQ"/>
</dbReference>
<dbReference type="NCBIfam" id="TIGR01737">
    <property type="entry name" value="FGAM_synth_I"/>
    <property type="match status" value="1"/>
</dbReference>
<dbReference type="NCBIfam" id="NF002957">
    <property type="entry name" value="PRK03619.1"/>
    <property type="match status" value="1"/>
</dbReference>
<dbReference type="PANTHER" id="PTHR47552">
    <property type="entry name" value="PHOSPHORIBOSYLFORMYLGLYCINAMIDINE SYNTHASE SUBUNIT PURQ"/>
    <property type="match status" value="1"/>
</dbReference>
<dbReference type="PANTHER" id="PTHR47552:SF1">
    <property type="entry name" value="PHOSPHORIBOSYLFORMYLGLYCINAMIDINE SYNTHASE SUBUNIT PURQ"/>
    <property type="match status" value="1"/>
</dbReference>
<dbReference type="Pfam" id="PF13507">
    <property type="entry name" value="GATase_5"/>
    <property type="match status" value="1"/>
</dbReference>
<dbReference type="PIRSF" id="PIRSF001586">
    <property type="entry name" value="FGAM_synth_I"/>
    <property type="match status" value="1"/>
</dbReference>
<dbReference type="SMART" id="SM01211">
    <property type="entry name" value="GATase_5"/>
    <property type="match status" value="1"/>
</dbReference>
<dbReference type="SUPFAM" id="SSF52317">
    <property type="entry name" value="Class I glutamine amidotransferase-like"/>
    <property type="match status" value="1"/>
</dbReference>
<dbReference type="PROSITE" id="PS51273">
    <property type="entry name" value="GATASE_TYPE_1"/>
    <property type="match status" value="1"/>
</dbReference>
<organism>
    <name type="scientific">Synechococcus elongatus (strain ATCC 33912 / PCC 7942 / FACHB-805)</name>
    <name type="common">Anacystis nidulans R2</name>
    <dbReference type="NCBI Taxonomy" id="1140"/>
    <lineage>
        <taxon>Bacteria</taxon>
        <taxon>Bacillati</taxon>
        <taxon>Cyanobacteriota</taxon>
        <taxon>Cyanophyceae</taxon>
        <taxon>Synechococcales</taxon>
        <taxon>Synechococcaceae</taxon>
        <taxon>Synechococcus</taxon>
    </lineage>
</organism>
<sequence>MNVGVIVFPGSNCDRDVQWVTAGLLGQSTRMIWHEERDLSGLDLIVVPGGFSYGDYLRCGAIARFSPAMQATVAFAEAGGLVLGICNGFQILTEVGLLPGALVRNRDLHFRCETTPLRVERSDRPWSRTYQQGQILNLPIAHGEGRYHADPATLAALEANGQVLFRYLDNPNGSCNDIAGITNVAGNVLGMMPHPERAAEAIAGSVDGLGLFAGLLEPVAA</sequence>
<proteinExistence type="inferred from homology"/>
<name>PURQ_SYNE7</name>
<protein>
    <recommendedName>
        <fullName evidence="1">Phosphoribosylformylglycinamidine synthase subunit PurQ</fullName>
        <shortName evidence="1">FGAM synthase</shortName>
        <ecNumber evidence="1">6.3.5.3</ecNumber>
    </recommendedName>
    <alternativeName>
        <fullName evidence="1">Formylglycinamide ribonucleotide amidotransferase subunit I</fullName>
        <shortName evidence="1">FGAR amidotransferase I</shortName>
        <shortName evidence="1">FGAR-AT I</shortName>
    </alternativeName>
    <alternativeName>
        <fullName evidence="1">Glutaminase PurQ</fullName>
        <ecNumber evidence="1">3.5.1.2</ecNumber>
    </alternativeName>
    <alternativeName>
        <fullName evidence="1">Phosphoribosylformylglycinamidine synthase subunit I</fullName>
    </alternativeName>
</protein>
<comment type="function">
    <text evidence="1">Part of the phosphoribosylformylglycinamidine synthase complex involved in the purines biosynthetic pathway. Catalyzes the ATP-dependent conversion of formylglycinamide ribonucleotide (FGAR) and glutamine to yield formylglycinamidine ribonucleotide (FGAM) and glutamate. The FGAM synthase complex is composed of three subunits. PurQ produces an ammonia molecule by converting glutamine to glutamate. PurL transfers the ammonia molecule to FGAR to form FGAM in an ATP-dependent manner. PurS interacts with PurQ and PurL and is thought to assist in the transfer of the ammonia molecule from PurQ to PurL.</text>
</comment>
<comment type="catalytic activity">
    <reaction evidence="1">
        <text>N(2)-formyl-N(1)-(5-phospho-beta-D-ribosyl)glycinamide + L-glutamine + ATP + H2O = 2-formamido-N(1)-(5-O-phospho-beta-D-ribosyl)acetamidine + L-glutamate + ADP + phosphate + H(+)</text>
        <dbReference type="Rhea" id="RHEA:17129"/>
        <dbReference type="ChEBI" id="CHEBI:15377"/>
        <dbReference type="ChEBI" id="CHEBI:15378"/>
        <dbReference type="ChEBI" id="CHEBI:29985"/>
        <dbReference type="ChEBI" id="CHEBI:30616"/>
        <dbReference type="ChEBI" id="CHEBI:43474"/>
        <dbReference type="ChEBI" id="CHEBI:58359"/>
        <dbReference type="ChEBI" id="CHEBI:147286"/>
        <dbReference type="ChEBI" id="CHEBI:147287"/>
        <dbReference type="ChEBI" id="CHEBI:456216"/>
        <dbReference type="EC" id="6.3.5.3"/>
    </reaction>
</comment>
<comment type="catalytic activity">
    <reaction evidence="1">
        <text>L-glutamine + H2O = L-glutamate + NH4(+)</text>
        <dbReference type="Rhea" id="RHEA:15889"/>
        <dbReference type="ChEBI" id="CHEBI:15377"/>
        <dbReference type="ChEBI" id="CHEBI:28938"/>
        <dbReference type="ChEBI" id="CHEBI:29985"/>
        <dbReference type="ChEBI" id="CHEBI:58359"/>
        <dbReference type="EC" id="3.5.1.2"/>
    </reaction>
</comment>
<comment type="pathway">
    <text evidence="1">Purine metabolism; IMP biosynthesis via de novo pathway; 5-amino-1-(5-phospho-D-ribosyl)imidazole from N(2)-formyl-N(1)-(5-phospho-D-ribosyl)glycinamide: step 1/2.</text>
</comment>
<comment type="subunit">
    <text evidence="1">Part of the FGAM synthase complex composed of 1 PurL, 1 PurQ and 2 PurS subunits.</text>
</comment>
<comment type="subcellular location">
    <subcellularLocation>
        <location evidence="1">Cytoplasm</location>
    </subcellularLocation>
</comment>